<name>DNAL1_CHLRE</name>
<dbReference type="EMBL" id="AF112476">
    <property type="protein sequence ID" value="AAD41040.1"/>
    <property type="molecule type" value="mRNA"/>
</dbReference>
<dbReference type="EMBL" id="DS496114">
    <property type="protein sequence ID" value="EDP06769.1"/>
    <property type="molecule type" value="Genomic_DNA"/>
</dbReference>
<dbReference type="RefSeq" id="XP_001701794.1">
    <property type="nucleotide sequence ID" value="XM_001701742.1"/>
</dbReference>
<dbReference type="PDB" id="1DS9">
    <property type="method" value="NMR"/>
    <property type="chains" value="A=1-198"/>
</dbReference>
<dbReference type="PDB" id="1M9L">
    <property type="method" value="NMR"/>
    <property type="chains" value="A=1-198"/>
</dbReference>
<dbReference type="PDB" id="5YXM">
    <property type="method" value="X-ray"/>
    <property type="resolution" value="1.54 A"/>
    <property type="chains" value="A=1-198"/>
</dbReference>
<dbReference type="PDB" id="6L4P">
    <property type="method" value="X-ray"/>
    <property type="resolution" value="1.70 A"/>
    <property type="chains" value="A=1-198"/>
</dbReference>
<dbReference type="PDB" id="8GLV">
    <property type="method" value="EM"/>
    <property type="resolution" value="3.10 A"/>
    <property type="chains" value="AA/Cb/Gg/Ll=1-198"/>
</dbReference>
<dbReference type="PDBsum" id="1DS9"/>
<dbReference type="PDBsum" id="1M9L"/>
<dbReference type="PDBsum" id="5YXM"/>
<dbReference type="PDBsum" id="6L4P"/>
<dbReference type="PDBsum" id="8GLV"/>
<dbReference type="BMRB" id="Q9XHH2"/>
<dbReference type="EMDB" id="EMD-40220"/>
<dbReference type="SMR" id="Q9XHH2"/>
<dbReference type="PaxDb" id="3055-EDP06769"/>
<dbReference type="EnsemblPlants" id="PNW86588">
    <property type="protein sequence ID" value="PNW86588"/>
    <property type="gene ID" value="CHLRE_02g092850v5"/>
</dbReference>
<dbReference type="GeneID" id="5727508"/>
<dbReference type="Gramene" id="PNW86588">
    <property type="protein sequence ID" value="PNW86588"/>
    <property type="gene ID" value="CHLRE_02g092850v5"/>
</dbReference>
<dbReference type="KEGG" id="cre:CHLRE_02g092850v5"/>
<dbReference type="eggNOG" id="KOG0531">
    <property type="taxonomic scope" value="Eukaryota"/>
</dbReference>
<dbReference type="HOGENOM" id="CLU_092189_0_0_1"/>
<dbReference type="OMA" id="NCERISM"/>
<dbReference type="OrthoDB" id="266138at2759"/>
<dbReference type="EvolutionaryTrace" id="Q9XHH2"/>
<dbReference type="GO" id="GO:0005874">
    <property type="term" value="C:microtubule"/>
    <property type="evidence" value="ECO:0007669"/>
    <property type="project" value="UniProtKB-KW"/>
</dbReference>
<dbReference type="GO" id="GO:0031514">
    <property type="term" value="C:motile cilium"/>
    <property type="evidence" value="ECO:0007669"/>
    <property type="project" value="UniProtKB-KW"/>
</dbReference>
<dbReference type="GO" id="GO:0036157">
    <property type="term" value="C:outer dynein arm"/>
    <property type="evidence" value="ECO:0000314"/>
    <property type="project" value="MGI"/>
</dbReference>
<dbReference type="FunFam" id="3.80.10.10:FF:000049">
    <property type="entry name" value="Dynein light chain 1"/>
    <property type="match status" value="1"/>
</dbReference>
<dbReference type="Gene3D" id="3.80.10.10">
    <property type="entry name" value="Ribonuclease Inhibitor"/>
    <property type="match status" value="1"/>
</dbReference>
<dbReference type="InterPro" id="IPR001611">
    <property type="entry name" value="Leu-rich_rpt"/>
</dbReference>
<dbReference type="InterPro" id="IPR025875">
    <property type="entry name" value="Leu-rich_rpt_4"/>
</dbReference>
<dbReference type="InterPro" id="IPR032675">
    <property type="entry name" value="LRR_dom_sf"/>
</dbReference>
<dbReference type="PANTHER" id="PTHR15454:SF73">
    <property type="entry name" value="DYNEIN AXONEMAL LIGHT CHAIN 1"/>
    <property type="match status" value="1"/>
</dbReference>
<dbReference type="PANTHER" id="PTHR15454">
    <property type="entry name" value="NISCHARIN RELATED"/>
    <property type="match status" value="1"/>
</dbReference>
<dbReference type="Pfam" id="PF12799">
    <property type="entry name" value="LRR_4"/>
    <property type="match status" value="2"/>
</dbReference>
<dbReference type="SMART" id="SM00365">
    <property type="entry name" value="LRR_SD22"/>
    <property type="match status" value="4"/>
</dbReference>
<dbReference type="SUPFAM" id="SSF52058">
    <property type="entry name" value="L domain-like"/>
    <property type="match status" value="1"/>
</dbReference>
<dbReference type="PROSITE" id="PS51450">
    <property type="entry name" value="LRR"/>
    <property type="match status" value="5"/>
</dbReference>
<sequence length="198" mass="22151">MAKATTIKDAIRIFEERKSVVATEAEKVELHGMIPPIEKMDATLSTLKACKHLALSTNNIEKISSLSGMENLRILSLGRNLIKKIENLDAVADTLEELWISYNQIASLSGIEKLVNLRVLYMSNNKITNWGEIDKLAALDKLEDLLLAGNPLYNDYKENNATSEYRIEVVKRLPNLKKLDGMPVDVDEREQANVARGG</sequence>
<keyword id="KW-0002">3D-structure</keyword>
<keyword id="KW-0966">Cell projection</keyword>
<keyword id="KW-0969">Cilium</keyword>
<keyword id="KW-0963">Cytoplasm</keyword>
<keyword id="KW-0206">Cytoskeleton</keyword>
<keyword id="KW-0903">Direct protein sequencing</keyword>
<keyword id="KW-0243">Dynein</keyword>
<keyword id="KW-0282">Flagellum</keyword>
<keyword id="KW-0433">Leucine-rich repeat</keyword>
<keyword id="KW-0493">Microtubule</keyword>
<keyword id="KW-0505">Motor protein</keyword>
<keyword id="KW-0677">Repeat</keyword>
<proteinExistence type="evidence at protein level"/>
<protein>
    <recommendedName>
        <fullName>Dynein axonemal light chain 1</fullName>
        <shortName evidence="8">DNAL1</shortName>
    </recommendedName>
    <alternativeName>
        <fullName>Flagellar outer arm dynein light chain 1</fullName>
    </alternativeName>
    <alternativeName>
        <fullName evidence="8">ODA-LC protein LC1</fullName>
    </alternativeName>
</protein>
<feature type="chain" id="PRO_0000282346" description="Dynein axonemal light chain 1">
    <location>
        <begin position="1"/>
        <end position="198"/>
    </location>
</feature>
<feature type="repeat" description="LRR 1">
    <location>
        <begin position="49"/>
        <end position="70"/>
    </location>
</feature>
<feature type="repeat" description="LRR 2">
    <location>
        <begin position="71"/>
        <end position="92"/>
    </location>
</feature>
<feature type="repeat" description="LRR 3">
    <location>
        <begin position="94"/>
        <end position="115"/>
    </location>
</feature>
<feature type="repeat" description="LRR 4">
    <location>
        <begin position="116"/>
        <end position="137"/>
    </location>
</feature>
<feature type="domain" description="LRRCT">
    <location>
        <begin position="157"/>
        <end position="195"/>
    </location>
</feature>
<feature type="site" description="Controls the orientation of the C-terminal helical region" evidence="7">
    <location>
        <position position="182"/>
    </location>
</feature>
<feature type="site" description="Controls the orientation of the C-terminal helical region" evidence="7">
    <location>
        <position position="185"/>
    </location>
</feature>
<feature type="mutagenesis site" description="Reduces swimming velocity." evidence="3">
    <original>M</original>
    <variation>A</variation>
    <location>
        <position position="182"/>
    </location>
</feature>
<feature type="mutagenesis site" description="Reduces swimming velocity." evidence="3">
    <original>M</original>
    <variation>G</variation>
    <location>
        <position position="182"/>
    </location>
</feature>
<feature type="mutagenesis site" description="Reduces swimming velocity." evidence="3">
    <original>M</original>
    <variation>P</variation>
    <location>
        <position position="182"/>
    </location>
</feature>
<feature type="mutagenesis site" description="Reduces swimming velocity." evidence="3">
    <original>D</original>
    <variation>G</variation>
    <location>
        <position position="185"/>
    </location>
</feature>
<feature type="mutagenesis site" description="Reduces swimming velocity and beat frequency." evidence="3">
    <original>D</original>
    <variation>P</variation>
    <location>
        <position position="185"/>
    </location>
</feature>
<feature type="mutagenesis site" description="Reduces swimming velocity." evidence="3">
    <original>R</original>
    <variation>A</variation>
    <location>
        <position position="189"/>
    </location>
</feature>
<feature type="mutagenesis site" description="Reduces swimming velocity." evidence="3">
    <original>R</original>
    <variation>E</variation>
    <location>
        <position position="189"/>
    </location>
</feature>
<feature type="mutagenesis site" description="Reduces swimming velocity." evidence="3">
    <original>R</original>
    <variation>A</variation>
    <location>
        <position position="196"/>
    </location>
</feature>
<feature type="mutagenesis site" description="Reduces swimming velocity." evidence="3">
    <original>R</original>
    <variation>D</variation>
    <location>
        <position position="196"/>
    </location>
</feature>
<feature type="helix" evidence="11">
    <location>
        <begin position="7"/>
        <end position="18"/>
    </location>
</feature>
<feature type="helix" evidence="11">
    <location>
        <begin position="22"/>
        <end position="24"/>
    </location>
</feature>
<feature type="strand" evidence="11">
    <location>
        <begin position="26"/>
        <end position="29"/>
    </location>
</feature>
<feature type="helix" evidence="11">
    <location>
        <begin position="42"/>
        <end position="46"/>
    </location>
</feature>
<feature type="turn" evidence="9">
    <location>
        <begin position="47"/>
        <end position="49"/>
    </location>
</feature>
<feature type="strand" evidence="11">
    <location>
        <begin position="51"/>
        <end position="54"/>
    </location>
</feature>
<feature type="strand" evidence="9">
    <location>
        <begin position="56"/>
        <end position="61"/>
    </location>
</feature>
<feature type="helix" evidence="9">
    <location>
        <begin position="66"/>
        <end position="69"/>
    </location>
</feature>
<feature type="strand" evidence="11">
    <location>
        <begin position="74"/>
        <end position="76"/>
    </location>
</feature>
<feature type="strand" evidence="10">
    <location>
        <begin position="79"/>
        <end position="82"/>
    </location>
</feature>
<feature type="helix" evidence="11">
    <location>
        <begin position="89"/>
        <end position="91"/>
    </location>
</feature>
<feature type="turn" evidence="11">
    <location>
        <begin position="92"/>
        <end position="94"/>
    </location>
</feature>
<feature type="strand" evidence="11">
    <location>
        <begin position="97"/>
        <end position="99"/>
    </location>
</feature>
<feature type="strand" evidence="10">
    <location>
        <begin position="101"/>
        <end position="104"/>
    </location>
</feature>
<feature type="helix" evidence="11">
    <location>
        <begin position="111"/>
        <end position="113"/>
    </location>
</feature>
<feature type="strand" evidence="11">
    <location>
        <begin position="119"/>
        <end position="121"/>
    </location>
</feature>
<feature type="helix" evidence="11">
    <location>
        <begin position="130"/>
        <end position="134"/>
    </location>
</feature>
<feature type="helix" evidence="11">
    <location>
        <begin position="135"/>
        <end position="138"/>
    </location>
</feature>
<feature type="strand" evidence="11">
    <location>
        <begin position="144"/>
        <end position="146"/>
    </location>
</feature>
<feature type="helix" evidence="11">
    <location>
        <begin position="151"/>
        <end position="158"/>
    </location>
</feature>
<feature type="helix" evidence="11">
    <location>
        <begin position="162"/>
        <end position="172"/>
    </location>
</feature>
<feature type="strand" evidence="9">
    <location>
        <begin position="177"/>
        <end position="179"/>
    </location>
</feature>
<feature type="helix" evidence="9">
    <location>
        <begin position="182"/>
        <end position="184"/>
    </location>
</feature>
<feature type="helix" evidence="11">
    <location>
        <begin position="186"/>
        <end position="195"/>
    </location>
</feature>
<reference key="1">
    <citation type="journal article" date="1999" name="Biochemistry">
        <title>Light chain 1 from the Chlamydomonas outer dynein arm is a leucine-rich repeat protein associated with the motor domain of the gamma heavy chain.</title>
        <authorList>
            <person name="Benashski S.E."/>
            <person name="Patel-King R.S."/>
            <person name="King S.M."/>
        </authorList>
    </citation>
    <scope>NUCLEOTIDE SEQUENCE [MRNA]</scope>
    <scope>PROTEIN SEQUENCE OF 84-103; 127-129; 132-135 AND 178-192</scope>
    <scope>FUNCTION</scope>
</reference>
<reference key="2">
    <citation type="journal article" date="2007" name="Science">
        <title>The Chlamydomonas genome reveals the evolution of key animal and plant functions.</title>
        <authorList>
            <person name="Merchant S.S."/>
            <person name="Prochnik S.E."/>
            <person name="Vallon O."/>
            <person name="Harris E.H."/>
            <person name="Karpowicz S.J."/>
            <person name="Witman G.B."/>
            <person name="Terry A."/>
            <person name="Salamov A."/>
            <person name="Fritz-Laylin L.K."/>
            <person name="Marechal-Drouard L."/>
            <person name="Marshall W.F."/>
            <person name="Qu L.H."/>
            <person name="Nelson D.R."/>
            <person name="Sanderfoot A.A."/>
            <person name="Spalding M.H."/>
            <person name="Kapitonov V.V."/>
            <person name="Ren Q."/>
            <person name="Ferris P."/>
            <person name="Lindquist E."/>
            <person name="Shapiro H."/>
            <person name="Lucas S.M."/>
            <person name="Grimwood J."/>
            <person name="Schmutz J."/>
            <person name="Cardol P."/>
            <person name="Cerutti H."/>
            <person name="Chanfreau G."/>
            <person name="Chen C.L."/>
            <person name="Cognat V."/>
            <person name="Croft M.T."/>
            <person name="Dent R."/>
            <person name="Dutcher S."/>
            <person name="Fernandez E."/>
            <person name="Fukuzawa H."/>
            <person name="Gonzalez-Ballester D."/>
            <person name="Gonzalez-Halphen D."/>
            <person name="Hallmann A."/>
            <person name="Hanikenne M."/>
            <person name="Hippler M."/>
            <person name="Inwood W."/>
            <person name="Jabbari K."/>
            <person name="Kalanon M."/>
            <person name="Kuras R."/>
            <person name="Lefebvre P.A."/>
            <person name="Lemaire S.D."/>
            <person name="Lobanov A.V."/>
            <person name="Lohr M."/>
            <person name="Manuell A."/>
            <person name="Meier I."/>
            <person name="Mets L."/>
            <person name="Mittag M."/>
            <person name="Mittelmeier T."/>
            <person name="Moroney J.V."/>
            <person name="Moseley J."/>
            <person name="Napoli C."/>
            <person name="Nedelcu A.M."/>
            <person name="Niyogi K."/>
            <person name="Novoselov S.V."/>
            <person name="Paulsen I.T."/>
            <person name="Pazour G.J."/>
            <person name="Purton S."/>
            <person name="Ral J.P."/>
            <person name="Riano-Pachon D.M."/>
            <person name="Riekhof W."/>
            <person name="Rymarquis L."/>
            <person name="Schroda M."/>
            <person name="Stern D."/>
            <person name="Umen J."/>
            <person name="Willows R."/>
            <person name="Wilson N."/>
            <person name="Zimmer S.L."/>
            <person name="Allmer J."/>
            <person name="Balk J."/>
            <person name="Bisova K."/>
            <person name="Chen C.J."/>
            <person name="Elias M."/>
            <person name="Gendler K."/>
            <person name="Hauser C."/>
            <person name="Lamb M.R."/>
            <person name="Ledford H."/>
            <person name="Long J.C."/>
            <person name="Minagawa J."/>
            <person name="Page M.D."/>
            <person name="Pan J."/>
            <person name="Pootakham W."/>
            <person name="Roje S."/>
            <person name="Rose A."/>
            <person name="Stahlberg E."/>
            <person name="Terauchi A.M."/>
            <person name="Yang P."/>
            <person name="Ball S."/>
            <person name="Bowler C."/>
            <person name="Dieckmann C.L."/>
            <person name="Gladyshev V.N."/>
            <person name="Green P."/>
            <person name="Jorgensen R."/>
            <person name="Mayfield S."/>
            <person name="Mueller-Roeber B."/>
            <person name="Rajamani S."/>
            <person name="Sayre R.T."/>
            <person name="Brokstein P."/>
            <person name="Dubchak I."/>
            <person name="Goodstein D."/>
            <person name="Hornick L."/>
            <person name="Huang Y.W."/>
            <person name="Jhaveri J."/>
            <person name="Luo Y."/>
            <person name="Martinez D."/>
            <person name="Ngau W.C."/>
            <person name="Otillar B."/>
            <person name="Poliakov A."/>
            <person name="Porter A."/>
            <person name="Szajkowski L."/>
            <person name="Werner G."/>
            <person name="Zhou K."/>
            <person name="Grigoriev I.V."/>
            <person name="Rokhsar D.S."/>
            <person name="Grossman A.R."/>
        </authorList>
    </citation>
    <scope>NUCLEOTIDE SEQUENCE [LARGE SCALE GENOMIC DNA]</scope>
    <source>
        <strain>CC-503</strain>
        <strain>cw92</strain>
    </source>
</reference>
<reference key="3">
    <citation type="journal article" date="2009" name="J. Cell Biol.">
        <title>An outer arm dynein light chain acts in a conformational switch for flagellar motility.</title>
        <authorList>
            <person name="Patel-King R.S."/>
            <person name="King S.M."/>
        </authorList>
    </citation>
    <scope>FUNCTION</scope>
    <scope>SUBCELLULAR LOCATION</scope>
    <scope>MUTAGENESIS OF MET-182; ASP-185; ARG-189 AND ARG-196</scope>
    <scope>INTERACTION WITH TUBULIN</scope>
    <scope>INTERACTION WITH ODA2</scope>
</reference>
<reference key="4">
    <citation type="journal article" date="2012" name="J. Biol. Chem.">
        <title>Functional architecture of the outer arm dynein conformational switch.</title>
        <authorList>
            <person name="King S.M."/>
            <person name="Patel-King R.S."/>
        </authorList>
    </citation>
    <scope>FUNCTION</scope>
    <scope>INTERACTION WITH TUBULIN</scope>
    <scope>INTERACTION WITH ODA2</scope>
</reference>
<reference key="5">
    <citation type="journal article" date="2000" name="Nat. Struct. Biol.">
        <title>Solution structure of a dynein motor domain associated light chain.</title>
        <authorList>
            <person name="Wu H."/>
            <person name="Maciejewski M.W."/>
            <person name="Marintchev A."/>
            <person name="Benashski S.E."/>
            <person name="Mullen G.P."/>
            <person name="King S.M."/>
        </authorList>
    </citation>
    <scope>STRUCTURE BY NMR</scope>
    <scope>SUBUNIT</scope>
</reference>
<reference key="6">
    <citation type="journal article" date="2003" name="Biochemistry">
        <title>Relaxation-based structure refinement and backbone molecular dynamics of the dynein motor domain-associated light chain.</title>
        <authorList>
            <person name="Wu H."/>
            <person name="Blackledge M."/>
            <person name="Maciejewski M.W."/>
            <person name="Mullen G.P."/>
            <person name="King S.M."/>
        </authorList>
    </citation>
    <scope>STRUCTURE BY NMR</scope>
</reference>
<organism>
    <name type="scientific">Chlamydomonas reinhardtii</name>
    <name type="common">Chlamydomonas smithii</name>
    <dbReference type="NCBI Taxonomy" id="3055"/>
    <lineage>
        <taxon>Eukaryota</taxon>
        <taxon>Viridiplantae</taxon>
        <taxon>Chlorophyta</taxon>
        <taxon>core chlorophytes</taxon>
        <taxon>Chlorophyceae</taxon>
        <taxon>CS clade</taxon>
        <taxon>Chlamydomonadales</taxon>
        <taxon>Chlamydomonadaceae</taxon>
        <taxon>Chlamydomonas</taxon>
    </lineage>
</organism>
<evidence type="ECO:0000269" key="1">
    <source>
    </source>
</evidence>
<evidence type="ECO:0000269" key="2">
    <source>
    </source>
</evidence>
<evidence type="ECO:0000269" key="3">
    <source>
    </source>
</evidence>
<evidence type="ECO:0000269" key="4">
    <source>
    </source>
</evidence>
<evidence type="ECO:0000303" key="5">
    <source>
    </source>
</evidence>
<evidence type="ECO:0000303" key="6">
    <source>
    </source>
</evidence>
<evidence type="ECO:0000303" key="7">
    <source>
    </source>
</evidence>
<evidence type="ECO:0000305" key="8"/>
<evidence type="ECO:0007829" key="9">
    <source>
        <dbReference type="PDB" id="1DS9"/>
    </source>
</evidence>
<evidence type="ECO:0007829" key="10">
    <source>
        <dbReference type="PDB" id="1M9L"/>
    </source>
</evidence>
<evidence type="ECO:0007829" key="11">
    <source>
        <dbReference type="PDB" id="5YXM"/>
    </source>
</evidence>
<comment type="function">
    <text evidence="1 3 4">Part of the multisubunit axonemal ATPase complexes that generate the force for flagellar motility and govern beat frequency (PubMed:19620633). Component of the outer arm dynein (ODA) (PubMed:19620633). May be involved in a mechanosensory feedback mechanism controlling ODA activity based on external conformational cues by tethering the outer arm dynein heavy chain (ODA2) to the A-tubule of the outer doublet microtubules within the axoneme (PubMed:10353837, PubMed:19620633, PubMed:22157010).</text>
</comment>
<comment type="subunit">
    <text evidence="2 3 4">Interacts with OCAD2, a outer arm dynein heavy chain (PubMed:19620633, PubMed:22157010). Interacts with tubulin (previously called p45) located within the A-tubule of the outer doublets in a ATP-independent manner (PubMed:10876244, PubMed:19620633, PubMed:22157010).</text>
</comment>
<comment type="subcellular location">
    <subcellularLocation>
        <location evidence="3">Cytoplasm</location>
        <location evidence="3">Cytoskeleton</location>
        <location evidence="3">Flagellum axoneme</location>
    </subcellularLocation>
</comment>
<comment type="miscellaneous">
    <text evidence="6">Outer (ODAs) and inner (IDAs) dynein arms contain the molecular motors that generate the force to move cilia by ATP-dependent reactions. There are two mechanosensory systems that monitor and respond to the mechanical state (curvature) of the axoneme. One system involves the central pair microtubule complex and radial spokes and the second system involves the outer dynein arms.</text>
</comment>
<comment type="similarity">
    <text evidence="8">Belongs to the dynein light chain LC1-type family.</text>
</comment>
<accession>Q9XHH2</accession>
<accession>A8I9F6</accession>
<gene>
    <name evidence="5" type="primary">LC1</name>
    <name type="ORF">CHLREDRAFT_186669</name>
</gene>